<accession>Q2ULC6</accession>
<keyword id="KW-0472">Membrane</keyword>
<keyword id="KW-0539">Nucleus</keyword>
<keyword id="KW-1185">Reference proteome</keyword>
<keyword id="KW-0677">Repeat</keyword>
<keyword id="KW-0687">Ribonucleoprotein</keyword>
<keyword id="KW-0690">Ribosome biogenesis</keyword>
<keyword id="KW-0698">rRNA processing</keyword>
<keyword id="KW-0812">Transmembrane</keyword>
<keyword id="KW-1133">Transmembrane helix</keyword>
<evidence type="ECO:0000250" key="1">
    <source>
        <dbReference type="UniProtKB" id="P42945"/>
    </source>
</evidence>
<evidence type="ECO:0000255" key="2"/>
<evidence type="ECO:0000305" key="3"/>
<evidence type="ECO:0000312" key="4">
    <source>
        <dbReference type="EMBL" id="BAE57639.1"/>
    </source>
</evidence>
<feature type="chain" id="PRO_0000308496" description="U3 small nucleolar RNA-associated protein 10">
    <location>
        <begin position="1"/>
        <end position="1802"/>
    </location>
</feature>
<feature type="transmembrane region" description="Helical" evidence="2">
    <location>
        <begin position="946"/>
        <end position="966"/>
    </location>
</feature>
<feature type="transmembrane region" description="Helical" evidence="2">
    <location>
        <begin position="1002"/>
        <end position="1022"/>
    </location>
</feature>
<feature type="repeat" description="HEAT 1" evidence="2">
    <location>
        <begin position="581"/>
        <end position="618"/>
    </location>
</feature>
<feature type="repeat" description="HEAT 2" evidence="2">
    <location>
        <begin position="1046"/>
        <end position="1083"/>
    </location>
</feature>
<feature type="repeat" description="HEAT 3" evidence="2">
    <location>
        <begin position="1253"/>
        <end position="1290"/>
    </location>
</feature>
<feature type="repeat" description="HEAT 4" evidence="2">
    <location>
        <begin position="1297"/>
        <end position="1335"/>
    </location>
</feature>
<feature type="repeat" description="HEAT 5" evidence="2">
    <location>
        <begin position="1758"/>
        <end position="1795"/>
    </location>
</feature>
<sequence length="1802" mass="198606">MASSLAAQLSQIAANSTNQLNLKAQRISHSQSLIFDRKVAGSQDFDTIYDICNEGFQELCELDPRFAQFERTIFSEQSKVQERTEMNAAQNKELDAVLETFLALVGGKLLLSPAVKAVEWLVRRFRIHEYNTEFTILTFLPYHTTPLFLNLLSILPEDLTPTFKILNPYKKSSVNPPRHPLVHSATTNKPFFAALNRYTIQVSKEQAGHHALLTFWAGIVTESVAGMLDSARSGRRNIEKENHDDIIMRVLPVLNDGLAMKDVAELVIGCYMVCVAIAQKASLHDKVLDSLMEAVAESWTEETVNSGLVCLAVLAQKKPDTTLPKRVFKAILRLENPLQQLSETSKQHRASQLLLGLVAGCVQDLSKQKDTARLDFLSLMFESELLGEAELGSGMAIVLRASSNSHKDGAMSLDAQTHLADLVQHFSRSESLRPIFQKTVAESSFDIVAIEQNLQTVIESAPAPKALEDIEMEDAEKEEEQDNFAPALKSLTGSSFKGSYLSTQSIPVYDNLVRAFALGIGAQEKLDAFANLPALDKGNAAKSPQYLSFFVRVFSGSYPIGTRVAALNMVSSFLTTASIDMDLQALLPFVLVTLADPSERVRREAAGILTIIGSLHKNKKGDAPGGVWARDTIYGQDKQPKNIQWTPGRDLQKVFERALLPGLEEYVIDPDHIGRVLEATLRGSSVSDSESSELKKAVRLSFFTCLCSHAVHVPLYAPKLGLLKLLNRVEKAGGTTRTKELGSLLKSWREMDGQQAKDVCEKERVPVSEMESQIVLTVTPKERDAITVLLSNVSPYSGSLSPSFVGAIFGRMKDVWAKVPEDRQALAAENLFEISLEQSDSPLVDGCKDVLRSVELPGAVLSQFLQKIPSTVTDMEGLGPAPKRRRTSQSNMVAMTVKDEAALSELMEKMTFILELVDSSSPETHPELADGLFQTLAALHHFKSQVQSGMSYLLSLALGSLLAIVNRSKTIGKPQFDTSVIRADLVVDCVRTTDSPQVQNAALLLVAGLSVIAPELVLHSVMPIFTFMGSSVLKKDDDYSVSVIDQTIDQVVPALIQSLRNQKRDVVSGTSELLLSFTAAFEHIPSHRRLRLFHALITKLGTQDFLFAVLSMLANRYSMDKDVLILMTGLVSDANAPVELATYSKYLGLVSDSLKAKPGISQVLLGIGSDDGREPQKVAVDLLRALAYLFRHSSLKSKMAKAFAIVEGDEPQQIRALFSQILEQTLAIGDNMQDMKSVGQASGEVLSALFGTLSLVDFLDTIEVLLQRPNDELRRKVLRLLEGRLRQNPERDSPSQTRMLDFLSVLVKIVESSPDILLKHAAVACIDRIADKYGKKDPSKVIPAARVVASEVCIGQEDDRIRIMGVLCLASMAEVLGQAMIPALPDTLSRSLALLGLSLEDGKENTRLHDAVYSLFSALFVHLPYMISASHLDKVLVLSYKSAMNDEFEEESRQEALRLMAKKVDASATFGAVDRNWQHAVQAGPEATKETLEVVSMAIEKHPKSSTAKNLPVITNILFKAFDLRREQLALGSDATFDLSDVDEIEETINEVTIKMIYKLNDSTFRPIFTKLLEWATTGVSKKDTQGSLARHTTFYKFLQVFFGTLQSIVTGYASYIIENVVSVLSKASPSNPNTKSLWLATMRLLKNAFEHDQDEFWQSPSHLTKIATPLISQLAHATHPTTATLVINEAIPAITELAVAADSTDNHKELNTVLMRYLRPSAGPTGKAAGGENPHTRLAALKTEQSLTEQLGEEWLALLPEMLPYISELMEDEDENVEKEVRKWVKQIEDVLGEKLDDMLT</sequence>
<dbReference type="EMBL" id="BA000050">
    <property type="protein sequence ID" value="BAE57639.1"/>
    <property type="molecule type" value="Genomic_DNA"/>
</dbReference>
<dbReference type="RefSeq" id="XP_001819641.1">
    <property type="nucleotide sequence ID" value="XM_001819589.1"/>
</dbReference>
<dbReference type="SMR" id="Q2ULC6"/>
<dbReference type="STRING" id="510516.Q2ULC6"/>
<dbReference type="EnsemblFungi" id="BAE57639">
    <property type="protein sequence ID" value="BAE57639"/>
    <property type="gene ID" value="AO090003000462"/>
</dbReference>
<dbReference type="GeneID" id="5991624"/>
<dbReference type="KEGG" id="aor:AO090003000462"/>
<dbReference type="VEuPathDB" id="FungiDB:AO090003000462"/>
<dbReference type="HOGENOM" id="CLU_001128_3_1_1"/>
<dbReference type="OMA" id="NDVMWKQ"/>
<dbReference type="OrthoDB" id="62086at5052"/>
<dbReference type="Proteomes" id="UP000006564">
    <property type="component" value="Chromosome 2"/>
</dbReference>
<dbReference type="GO" id="GO:0030686">
    <property type="term" value="C:90S preribosome"/>
    <property type="evidence" value="ECO:0007669"/>
    <property type="project" value="TreeGrafter"/>
</dbReference>
<dbReference type="GO" id="GO:0016020">
    <property type="term" value="C:membrane"/>
    <property type="evidence" value="ECO:0007669"/>
    <property type="project" value="UniProtKB-SubCell"/>
</dbReference>
<dbReference type="GO" id="GO:0032040">
    <property type="term" value="C:small-subunit processome"/>
    <property type="evidence" value="ECO:0007669"/>
    <property type="project" value="TreeGrafter"/>
</dbReference>
<dbReference type="GO" id="GO:0034455">
    <property type="term" value="C:t-UTP complex"/>
    <property type="evidence" value="ECO:0007669"/>
    <property type="project" value="TreeGrafter"/>
</dbReference>
<dbReference type="GO" id="GO:0030515">
    <property type="term" value="F:snoRNA binding"/>
    <property type="evidence" value="ECO:0007669"/>
    <property type="project" value="TreeGrafter"/>
</dbReference>
<dbReference type="GO" id="GO:0000462">
    <property type="term" value="P:maturation of SSU-rRNA from tricistronic rRNA transcript (SSU-rRNA, 5.8S rRNA, LSU-rRNA)"/>
    <property type="evidence" value="ECO:0007669"/>
    <property type="project" value="TreeGrafter"/>
</dbReference>
<dbReference type="GO" id="GO:0045943">
    <property type="term" value="P:positive regulation of transcription by RNA polymerase I"/>
    <property type="evidence" value="ECO:0007669"/>
    <property type="project" value="TreeGrafter"/>
</dbReference>
<dbReference type="Gene3D" id="1.25.10.10">
    <property type="entry name" value="Leucine-rich Repeat Variant"/>
    <property type="match status" value="1"/>
</dbReference>
<dbReference type="InterPro" id="IPR011989">
    <property type="entry name" value="ARM-like"/>
</dbReference>
<dbReference type="InterPro" id="IPR016024">
    <property type="entry name" value="ARM-type_fold"/>
</dbReference>
<dbReference type="InterPro" id="IPR012954">
    <property type="entry name" value="BP28_C_dom"/>
</dbReference>
<dbReference type="InterPro" id="IPR021133">
    <property type="entry name" value="HEAT_type_2"/>
</dbReference>
<dbReference type="InterPro" id="IPR056473">
    <property type="entry name" value="HEAT_Utp10/HEAT1"/>
</dbReference>
<dbReference type="InterPro" id="IPR022125">
    <property type="entry name" value="U3snoRNP10_N"/>
</dbReference>
<dbReference type="InterPro" id="IPR040191">
    <property type="entry name" value="UTP10"/>
</dbReference>
<dbReference type="PANTHER" id="PTHR13457">
    <property type="entry name" value="BAP28"/>
    <property type="match status" value="1"/>
</dbReference>
<dbReference type="PANTHER" id="PTHR13457:SF1">
    <property type="entry name" value="HEAT REPEAT-CONTAINING PROTEIN 1"/>
    <property type="match status" value="1"/>
</dbReference>
<dbReference type="Pfam" id="PF08146">
    <property type="entry name" value="BP28CT"/>
    <property type="match status" value="1"/>
</dbReference>
<dbReference type="Pfam" id="PF23243">
    <property type="entry name" value="HEAT_HEATR1"/>
    <property type="match status" value="1"/>
</dbReference>
<dbReference type="Pfam" id="PF12397">
    <property type="entry name" value="U3snoRNP10"/>
    <property type="match status" value="1"/>
</dbReference>
<dbReference type="SMART" id="SM01036">
    <property type="entry name" value="BP28CT"/>
    <property type="match status" value="1"/>
</dbReference>
<dbReference type="SUPFAM" id="SSF48371">
    <property type="entry name" value="ARM repeat"/>
    <property type="match status" value="2"/>
</dbReference>
<dbReference type="PROSITE" id="PS50077">
    <property type="entry name" value="HEAT_REPEAT"/>
    <property type="match status" value="1"/>
</dbReference>
<name>UTP10_ASPOR</name>
<protein>
    <recommendedName>
        <fullName>U3 small nucleolar RNA-associated protein 10</fullName>
    </recommendedName>
</protein>
<reference evidence="4" key="1">
    <citation type="journal article" date="2005" name="Nature">
        <title>Genome sequencing and analysis of Aspergillus oryzae.</title>
        <authorList>
            <person name="Machida M."/>
            <person name="Asai K."/>
            <person name="Sano M."/>
            <person name="Tanaka T."/>
            <person name="Kumagai T."/>
            <person name="Terai G."/>
            <person name="Kusumoto K."/>
            <person name="Arima T."/>
            <person name="Akita O."/>
            <person name="Kashiwagi Y."/>
            <person name="Abe K."/>
            <person name="Gomi K."/>
            <person name="Horiuchi H."/>
            <person name="Kitamoto K."/>
            <person name="Kobayashi T."/>
            <person name="Takeuchi M."/>
            <person name="Denning D.W."/>
            <person name="Galagan J.E."/>
            <person name="Nierman W.C."/>
            <person name="Yu J."/>
            <person name="Archer D.B."/>
            <person name="Bennett J.W."/>
            <person name="Bhatnagar D."/>
            <person name="Cleveland T.E."/>
            <person name="Fedorova N.D."/>
            <person name="Gotoh O."/>
            <person name="Horikawa H."/>
            <person name="Hosoyama A."/>
            <person name="Ichinomiya M."/>
            <person name="Igarashi R."/>
            <person name="Iwashita K."/>
            <person name="Juvvadi P.R."/>
            <person name="Kato M."/>
            <person name="Kato Y."/>
            <person name="Kin T."/>
            <person name="Kokubun A."/>
            <person name="Maeda H."/>
            <person name="Maeyama N."/>
            <person name="Maruyama J."/>
            <person name="Nagasaki H."/>
            <person name="Nakajima T."/>
            <person name="Oda K."/>
            <person name="Okada K."/>
            <person name="Paulsen I."/>
            <person name="Sakamoto K."/>
            <person name="Sawano T."/>
            <person name="Takahashi M."/>
            <person name="Takase K."/>
            <person name="Terabayashi Y."/>
            <person name="Wortman J.R."/>
            <person name="Yamada O."/>
            <person name="Yamagata Y."/>
            <person name="Anazawa H."/>
            <person name="Hata Y."/>
            <person name="Koide Y."/>
            <person name="Komori T."/>
            <person name="Koyama Y."/>
            <person name="Minetoki T."/>
            <person name="Suharnan S."/>
            <person name="Tanaka A."/>
            <person name="Isono K."/>
            <person name="Kuhara S."/>
            <person name="Ogasawara N."/>
            <person name="Kikuchi H."/>
        </authorList>
    </citation>
    <scope>NUCLEOTIDE SEQUENCE [LARGE SCALE GENOMIC DNA]</scope>
    <source>
        <strain>ATCC 42149 / RIB 40</strain>
    </source>
</reference>
<organism>
    <name type="scientific">Aspergillus oryzae (strain ATCC 42149 / RIB 40)</name>
    <name type="common">Yellow koji mold</name>
    <dbReference type="NCBI Taxonomy" id="510516"/>
    <lineage>
        <taxon>Eukaryota</taxon>
        <taxon>Fungi</taxon>
        <taxon>Dikarya</taxon>
        <taxon>Ascomycota</taxon>
        <taxon>Pezizomycotina</taxon>
        <taxon>Eurotiomycetes</taxon>
        <taxon>Eurotiomycetidae</taxon>
        <taxon>Eurotiales</taxon>
        <taxon>Aspergillaceae</taxon>
        <taxon>Aspergillus</taxon>
        <taxon>Aspergillus subgen. Circumdati</taxon>
    </lineage>
</organism>
<proteinExistence type="inferred from homology"/>
<comment type="function">
    <text evidence="1">Involved in nucleolar processing of pre-18S ribosomal RNA. Involved in ribosome biosynthesis (By similarity).</text>
</comment>
<comment type="subunit">
    <text evidence="1">Component of the ribosomal small subunit (SSU) processome.</text>
</comment>
<comment type="subcellular location">
    <subcellularLocation>
        <location evidence="1 2">Nucleus</location>
        <location evidence="1 2">Nucleolus</location>
    </subcellularLocation>
    <subcellularLocation>
        <location evidence="2">Membrane</location>
        <topology evidence="2">Multi-pass membrane protein</topology>
    </subcellularLocation>
</comment>
<comment type="similarity">
    <text evidence="3">Belongs to the HEATR1/UTP10 family.</text>
</comment>
<gene>
    <name evidence="1" type="primary">utp10</name>
    <name type="ORF">AO090003000462</name>
</gene>